<dbReference type="EMBL" id="AE001273">
    <property type="protein sequence ID" value="AAC67982.2"/>
    <property type="molecule type" value="Genomic_DNA"/>
</dbReference>
<dbReference type="PIR" id="F71522">
    <property type="entry name" value="F71522"/>
</dbReference>
<dbReference type="RefSeq" id="NP_219896.1">
    <property type="nucleotide sequence ID" value="NC_000117.1"/>
</dbReference>
<dbReference type="RefSeq" id="WP_009871738.1">
    <property type="nucleotide sequence ID" value="NC_000117.1"/>
</dbReference>
<dbReference type="STRING" id="272561.CT_386"/>
<dbReference type="EnsemblBacteria" id="AAC67982">
    <property type="protein sequence ID" value="AAC67982"/>
    <property type="gene ID" value="CT_386"/>
</dbReference>
<dbReference type="GeneID" id="884730"/>
<dbReference type="KEGG" id="ctr:CT_386"/>
<dbReference type="PATRIC" id="fig|272561.5.peg.416"/>
<dbReference type="HOGENOM" id="CLU_051576_1_1_0"/>
<dbReference type="InParanoid" id="O84391"/>
<dbReference type="OrthoDB" id="183622at2"/>
<dbReference type="Proteomes" id="UP000000431">
    <property type="component" value="Chromosome"/>
</dbReference>
<dbReference type="InterPro" id="IPR003226">
    <property type="entry name" value="MYG1_exonuclease"/>
</dbReference>
<dbReference type="PANTHER" id="PTHR11215">
    <property type="entry name" value="METAL DEPENDENT HYDROLASE - RELATED"/>
    <property type="match status" value="1"/>
</dbReference>
<dbReference type="PANTHER" id="PTHR11215:SF1">
    <property type="entry name" value="MYG1 EXONUCLEASE"/>
    <property type="match status" value="1"/>
</dbReference>
<dbReference type="Pfam" id="PF03690">
    <property type="entry name" value="MYG1_exonuc"/>
    <property type="match status" value="1"/>
</dbReference>
<evidence type="ECO:0000305" key="1"/>
<proteinExistence type="inferred from homology"/>
<reference key="1">
    <citation type="journal article" date="1998" name="Science">
        <title>Genome sequence of an obligate intracellular pathogen of humans: Chlamydia trachomatis.</title>
        <authorList>
            <person name="Stephens R.S."/>
            <person name="Kalman S."/>
            <person name="Lammel C.J."/>
            <person name="Fan J."/>
            <person name="Marathe R."/>
            <person name="Aravind L."/>
            <person name="Mitchell W.P."/>
            <person name="Olinger L."/>
            <person name="Tatusov R.L."/>
            <person name="Zhao Q."/>
            <person name="Koonin E.V."/>
            <person name="Davis R.W."/>
        </authorList>
    </citation>
    <scope>NUCLEOTIDE SEQUENCE [LARGE SCALE GENOMIC DNA]</scope>
    <source>
        <strain>ATCC VR-885 / DSM 19411 / UW-3/Cx</strain>
    </source>
</reference>
<feature type="chain" id="PRO_0000213490" description="MYG1 protein CT_386">
    <location>
        <begin position="1"/>
        <end position="289"/>
    </location>
</feature>
<name>Y386_CHLTR</name>
<organism>
    <name type="scientific">Chlamydia trachomatis serovar D (strain ATCC VR-885 / DSM 19411 / UW-3/Cx)</name>
    <dbReference type="NCBI Taxonomy" id="272561"/>
    <lineage>
        <taxon>Bacteria</taxon>
        <taxon>Pseudomonadati</taxon>
        <taxon>Chlamydiota</taxon>
        <taxon>Chlamydiia</taxon>
        <taxon>Chlamydiales</taxon>
        <taxon>Chlamydiaceae</taxon>
        <taxon>Chlamydia/Chlamydophila group</taxon>
        <taxon>Chlamydia</taxon>
    </lineage>
</organism>
<keyword id="KW-1185">Reference proteome</keyword>
<comment type="similarity">
    <text evidence="1">Belongs to the MYG1 family.</text>
</comment>
<gene>
    <name type="ordered locus">CT_386</name>
</gene>
<accession>O84391</accession>
<protein>
    <recommendedName>
        <fullName>MYG1 protein CT_386</fullName>
    </recommendedName>
</protein>
<sequence length="289" mass="33124">MQIPRSVGTHDGSFHADEVTACALLIMFDLVDENKIVRTRDPQKLAQCEYVCDVGGRYSTEHKRFDHHQVSYTGSWSSAGMVLDYLHGLGFLSHDEYEYLNNTLVHGVDEQDNGRFFSKEGFCSFSDIIKIYNPLEEGGNTDKEFFFALRFAIDLLTRLREKFCYDRVCRDIVKQVMEKESVCLRFDRPLAWQENFFSLGGESHPAAFVSFPCSDQWILRGIPPTLDRRMEVRIPFPEEWAGLLGDQLVQATGIPGAIFCHKGLFLSVWDSQESCEEALNLVLKQQRLV</sequence>